<organism>
    <name type="scientific">Mycobacterium avium (strain 104)</name>
    <dbReference type="NCBI Taxonomy" id="243243"/>
    <lineage>
        <taxon>Bacteria</taxon>
        <taxon>Bacillati</taxon>
        <taxon>Actinomycetota</taxon>
        <taxon>Actinomycetes</taxon>
        <taxon>Mycobacteriales</taxon>
        <taxon>Mycobacteriaceae</taxon>
        <taxon>Mycobacterium</taxon>
        <taxon>Mycobacterium avium complex (MAC)</taxon>
    </lineage>
</organism>
<name>Y052_MYCA1</name>
<protein>
    <recommendedName>
        <fullName evidence="1">UPF0301 protein MAV_0052</fullName>
    </recommendedName>
</protein>
<gene>
    <name type="ordered locus">MAV_0052</name>
</gene>
<proteinExistence type="inferred from homology"/>
<sequence length="201" mass="21739">MPPPEDPEDYVAPAAQRVRAGTLLLANTDLLEPTFRRSVIYIVEHNDGGTLGVVLNRPSDTAVYNVLPQWTTLAAKPKTMFIGGPVKRDAALCLATLRVGADPQGAPGLRHVDGRVVMVDLDADPDAIAPLVEGVRIFAGYSGWTIGQLEGEIERDDWIVLSALPSDVLVGPRSDLWGQVLRRQPLPLSLLATHPIDISRN</sequence>
<evidence type="ECO:0000255" key="1">
    <source>
        <dbReference type="HAMAP-Rule" id="MF_00758"/>
    </source>
</evidence>
<comment type="similarity">
    <text evidence="1">Belongs to the UPF0301 (AlgH) family.</text>
</comment>
<reference key="1">
    <citation type="submission" date="2006-10" db="EMBL/GenBank/DDBJ databases">
        <authorList>
            <person name="Fleischmann R.D."/>
            <person name="Dodson R.J."/>
            <person name="Haft D.H."/>
            <person name="Merkel J.S."/>
            <person name="Nelson W.C."/>
            <person name="Fraser C.M."/>
        </authorList>
    </citation>
    <scope>NUCLEOTIDE SEQUENCE [LARGE SCALE GENOMIC DNA]</scope>
    <source>
        <strain>104</strain>
    </source>
</reference>
<feature type="chain" id="PRO_1000046661" description="UPF0301 protein MAV_0052">
    <location>
        <begin position="1"/>
        <end position="201"/>
    </location>
</feature>
<accession>A0Q8W4</accession>
<dbReference type="EMBL" id="CP000479">
    <property type="protein sequence ID" value="ABK66131.1"/>
    <property type="molecule type" value="Genomic_DNA"/>
</dbReference>
<dbReference type="RefSeq" id="WP_003874756.1">
    <property type="nucleotide sequence ID" value="NC_008595.1"/>
</dbReference>
<dbReference type="SMR" id="A0Q8W4"/>
<dbReference type="KEGG" id="mav:MAV_0052"/>
<dbReference type="HOGENOM" id="CLU_057596_2_0_11"/>
<dbReference type="Proteomes" id="UP000001574">
    <property type="component" value="Chromosome"/>
</dbReference>
<dbReference type="GO" id="GO:0005829">
    <property type="term" value="C:cytosol"/>
    <property type="evidence" value="ECO:0007669"/>
    <property type="project" value="TreeGrafter"/>
</dbReference>
<dbReference type="Gene3D" id="3.40.1740.10">
    <property type="entry name" value="VC0467-like"/>
    <property type="match status" value="1"/>
</dbReference>
<dbReference type="HAMAP" id="MF_00758">
    <property type="entry name" value="UPF0301"/>
    <property type="match status" value="1"/>
</dbReference>
<dbReference type="InterPro" id="IPR003774">
    <property type="entry name" value="AlgH-like"/>
</dbReference>
<dbReference type="NCBIfam" id="NF001269">
    <property type="entry name" value="PRK00228.2-1"/>
    <property type="match status" value="1"/>
</dbReference>
<dbReference type="NCBIfam" id="NF001272">
    <property type="entry name" value="PRK00228.2-4"/>
    <property type="match status" value="1"/>
</dbReference>
<dbReference type="PANTHER" id="PTHR30327">
    <property type="entry name" value="UNCHARACTERIZED PROTEIN YQGE"/>
    <property type="match status" value="1"/>
</dbReference>
<dbReference type="PANTHER" id="PTHR30327:SF1">
    <property type="entry name" value="UPF0301 PROTEIN YQGE"/>
    <property type="match status" value="1"/>
</dbReference>
<dbReference type="Pfam" id="PF02622">
    <property type="entry name" value="DUF179"/>
    <property type="match status" value="1"/>
</dbReference>
<dbReference type="SUPFAM" id="SSF143456">
    <property type="entry name" value="VC0467-like"/>
    <property type="match status" value="1"/>
</dbReference>